<evidence type="ECO:0000250" key="1"/>
<evidence type="ECO:0000255" key="2"/>
<evidence type="ECO:0000305" key="3"/>
<protein>
    <recommendedName>
        <fullName>Dirigent protein 3</fullName>
        <shortName>AtDIR3</shortName>
    </recommendedName>
</protein>
<proteinExistence type="inferred from homology"/>
<feature type="signal peptide" evidence="2">
    <location>
        <begin position="1"/>
        <end position="21"/>
    </location>
</feature>
<feature type="chain" id="PRO_0000422834" description="Dirigent protein 3">
    <location>
        <begin position="22"/>
        <end position="191"/>
    </location>
</feature>
<feature type="glycosylation site" description="N-linked (GlcNAc...) asparagine" evidence="2">
    <location>
        <position position="96"/>
    </location>
</feature>
<feature type="glycosylation site" description="N-linked (GlcNAc...) asparagine" evidence="2">
    <location>
        <position position="131"/>
    </location>
</feature>
<sequence length="191" mass="20897">MSKLILILTAQILLLTATALAGKNGEDFARTINRKHLGLGKKEKLTHLRVYWHDIVTGRNPSSIRIQGPVAKYSSSSYFGSITMIDNALTLDVPINSTVVGQAQGMYVGAAQKEIGLLMAMNLAFKTGKYNGSTITILGRNTVMSKVREMPVVGGSGMFRFARGYVEARTKLFDMKTGDATVESNCYILHY</sequence>
<reference key="1">
    <citation type="journal article" date="1999" name="DNA Res.">
        <title>Structural analysis of Arabidopsis thaliana chromosome 5. IX. Sequence features of the regions of 1,011,550 bp covered by seventeen P1 and TAC clones.</title>
        <authorList>
            <person name="Kaneko T."/>
            <person name="Katoh T."/>
            <person name="Sato S."/>
            <person name="Nakamura Y."/>
            <person name="Asamizu E."/>
            <person name="Kotani H."/>
            <person name="Miyajima N."/>
            <person name="Tabata S."/>
        </authorList>
    </citation>
    <scope>NUCLEOTIDE SEQUENCE [LARGE SCALE GENOMIC DNA]</scope>
    <source>
        <strain>cv. Columbia</strain>
    </source>
</reference>
<reference key="2">
    <citation type="journal article" date="2017" name="Plant J.">
        <title>Araport11: a complete reannotation of the Arabidopsis thaliana reference genome.</title>
        <authorList>
            <person name="Cheng C.Y."/>
            <person name="Krishnakumar V."/>
            <person name="Chan A.P."/>
            <person name="Thibaud-Nissen F."/>
            <person name="Schobel S."/>
            <person name="Town C.D."/>
        </authorList>
    </citation>
    <scope>GENOME REANNOTATION</scope>
    <source>
        <strain>cv. Columbia</strain>
    </source>
</reference>
<reference key="3">
    <citation type="journal article" date="2007" name="Phytochemistry">
        <title>Dirigent proteins in conifer defense II: Extended gene discovery, phylogeny, and constitutive and stress-induced gene expression in spruce (Picea spp.).</title>
        <authorList>
            <person name="Ralph S.G."/>
            <person name="Jancsik S."/>
            <person name="Bohlmann J."/>
        </authorList>
    </citation>
    <scope>GENE FAMILY</scope>
    <scope>NOMENCLATURE</scope>
</reference>
<organism>
    <name type="scientific">Arabidopsis thaliana</name>
    <name type="common">Mouse-ear cress</name>
    <dbReference type="NCBI Taxonomy" id="3702"/>
    <lineage>
        <taxon>Eukaryota</taxon>
        <taxon>Viridiplantae</taxon>
        <taxon>Streptophyta</taxon>
        <taxon>Embryophyta</taxon>
        <taxon>Tracheophyta</taxon>
        <taxon>Spermatophyta</taxon>
        <taxon>Magnoliopsida</taxon>
        <taxon>eudicotyledons</taxon>
        <taxon>Gunneridae</taxon>
        <taxon>Pentapetalae</taxon>
        <taxon>rosids</taxon>
        <taxon>malvids</taxon>
        <taxon>Brassicales</taxon>
        <taxon>Brassicaceae</taxon>
        <taxon>Camelineae</taxon>
        <taxon>Arabidopsis</taxon>
    </lineage>
</organism>
<gene>
    <name type="primary">DIR3</name>
    <name type="ordered locus">At5g49040</name>
    <name type="ORF">K19E20.19</name>
</gene>
<accession>Q9FI66</accession>
<keyword id="KW-0052">Apoplast</keyword>
<keyword id="KW-0325">Glycoprotein</keyword>
<keyword id="KW-1185">Reference proteome</keyword>
<keyword id="KW-0964">Secreted</keyword>
<keyword id="KW-0732">Signal</keyword>
<name>DIR3_ARATH</name>
<dbReference type="EMBL" id="AB017061">
    <property type="protein sequence ID" value="BAB10328.1"/>
    <property type="molecule type" value="Genomic_DNA"/>
</dbReference>
<dbReference type="EMBL" id="CP002688">
    <property type="protein sequence ID" value="AED95765.1"/>
    <property type="molecule type" value="Genomic_DNA"/>
</dbReference>
<dbReference type="RefSeq" id="NP_199715.1">
    <property type="nucleotide sequence ID" value="NM_124281.1"/>
</dbReference>
<dbReference type="SMR" id="Q9FI66"/>
<dbReference type="STRING" id="3702.Q9FI66"/>
<dbReference type="GlyCosmos" id="Q9FI66">
    <property type="glycosylation" value="2 sites, No reported glycans"/>
</dbReference>
<dbReference type="GlyGen" id="Q9FI66">
    <property type="glycosylation" value="2 sites"/>
</dbReference>
<dbReference type="PaxDb" id="3702-AT5G49040.1"/>
<dbReference type="ProteomicsDB" id="222020"/>
<dbReference type="EnsemblPlants" id="AT5G49040.1">
    <property type="protein sequence ID" value="AT5G49040.1"/>
    <property type="gene ID" value="AT5G49040"/>
</dbReference>
<dbReference type="GeneID" id="834963"/>
<dbReference type="Gramene" id="AT5G49040.1">
    <property type="protein sequence ID" value="AT5G49040.1"/>
    <property type="gene ID" value="AT5G49040"/>
</dbReference>
<dbReference type="KEGG" id="ath:AT5G49040"/>
<dbReference type="Araport" id="AT5G49040"/>
<dbReference type="TAIR" id="AT5G49040"/>
<dbReference type="eggNOG" id="ENOG502RXST">
    <property type="taxonomic scope" value="Eukaryota"/>
</dbReference>
<dbReference type="HOGENOM" id="CLU_087111_2_1_1"/>
<dbReference type="InParanoid" id="Q9FI66"/>
<dbReference type="OMA" id="MKPDINS"/>
<dbReference type="PhylomeDB" id="Q9FI66"/>
<dbReference type="PRO" id="PR:Q9FI66"/>
<dbReference type="Proteomes" id="UP000006548">
    <property type="component" value="Chromosome 5"/>
</dbReference>
<dbReference type="ExpressionAtlas" id="Q9FI66">
    <property type="expression patterns" value="baseline"/>
</dbReference>
<dbReference type="GO" id="GO:0048046">
    <property type="term" value="C:apoplast"/>
    <property type="evidence" value="ECO:0007669"/>
    <property type="project" value="UniProtKB-SubCell"/>
</dbReference>
<dbReference type="GO" id="GO:0009699">
    <property type="term" value="P:phenylpropanoid biosynthetic process"/>
    <property type="evidence" value="ECO:0007669"/>
    <property type="project" value="UniProtKB-ARBA"/>
</dbReference>
<dbReference type="Gene3D" id="2.40.480.10">
    <property type="entry name" value="Allene oxide cyclase-like"/>
    <property type="match status" value="1"/>
</dbReference>
<dbReference type="InterPro" id="IPR044859">
    <property type="entry name" value="Allene_oxi_cyc_Dirigent"/>
</dbReference>
<dbReference type="InterPro" id="IPR004265">
    <property type="entry name" value="Dirigent"/>
</dbReference>
<dbReference type="PANTHER" id="PTHR21495">
    <property type="entry name" value="NUCLEOPORIN-RELATED"/>
    <property type="match status" value="1"/>
</dbReference>
<dbReference type="Pfam" id="PF03018">
    <property type="entry name" value="Dirigent"/>
    <property type="match status" value="1"/>
</dbReference>
<comment type="function">
    <text evidence="1">Dirigent proteins impart stereoselectivity on the phenoxy radical-coupling reaction, yielding optically active lignans from two molecules of coniferyl alcohol in the biosynthesis of lignans, flavonolignans, and alkaloids and thus plays a central role in plant secondary metabolism.</text>
</comment>
<comment type="subunit">
    <text evidence="1">Homodimer.</text>
</comment>
<comment type="subcellular location">
    <subcellularLocation>
        <location evidence="1">Secreted</location>
        <location evidence="1">Extracellular space</location>
        <location evidence="1">Apoplast</location>
    </subcellularLocation>
</comment>
<comment type="similarity">
    <text evidence="3">Belongs to the plant dirigent protein family.</text>
</comment>